<dbReference type="EMBL" id="CP000115">
    <property type="protein sequence ID" value="ABA04641.1"/>
    <property type="molecule type" value="Genomic_DNA"/>
</dbReference>
<dbReference type="RefSeq" id="WP_011314654.1">
    <property type="nucleotide sequence ID" value="NC_007406.1"/>
</dbReference>
<dbReference type="SMR" id="Q3SSV0"/>
<dbReference type="STRING" id="323098.Nwi_1380"/>
<dbReference type="KEGG" id="nwi:Nwi_1380"/>
<dbReference type="eggNOG" id="COG0256">
    <property type="taxonomic scope" value="Bacteria"/>
</dbReference>
<dbReference type="HOGENOM" id="CLU_098841_0_1_5"/>
<dbReference type="OrthoDB" id="9810939at2"/>
<dbReference type="Proteomes" id="UP000002531">
    <property type="component" value="Chromosome"/>
</dbReference>
<dbReference type="GO" id="GO:0022625">
    <property type="term" value="C:cytosolic large ribosomal subunit"/>
    <property type="evidence" value="ECO:0007669"/>
    <property type="project" value="TreeGrafter"/>
</dbReference>
<dbReference type="GO" id="GO:0008097">
    <property type="term" value="F:5S rRNA binding"/>
    <property type="evidence" value="ECO:0007669"/>
    <property type="project" value="TreeGrafter"/>
</dbReference>
<dbReference type="GO" id="GO:0003735">
    <property type="term" value="F:structural constituent of ribosome"/>
    <property type="evidence" value="ECO:0007669"/>
    <property type="project" value="InterPro"/>
</dbReference>
<dbReference type="GO" id="GO:0006412">
    <property type="term" value="P:translation"/>
    <property type="evidence" value="ECO:0007669"/>
    <property type="project" value="UniProtKB-UniRule"/>
</dbReference>
<dbReference type="CDD" id="cd00432">
    <property type="entry name" value="Ribosomal_L18_L5e"/>
    <property type="match status" value="1"/>
</dbReference>
<dbReference type="FunFam" id="3.30.420.100:FF:000001">
    <property type="entry name" value="50S ribosomal protein L18"/>
    <property type="match status" value="1"/>
</dbReference>
<dbReference type="Gene3D" id="3.30.420.100">
    <property type="match status" value="1"/>
</dbReference>
<dbReference type="HAMAP" id="MF_01337_B">
    <property type="entry name" value="Ribosomal_uL18_B"/>
    <property type="match status" value="1"/>
</dbReference>
<dbReference type="InterPro" id="IPR004389">
    <property type="entry name" value="Ribosomal_uL18_bac-type"/>
</dbReference>
<dbReference type="InterPro" id="IPR005484">
    <property type="entry name" value="Ribosomal_uL18_bac/euk"/>
</dbReference>
<dbReference type="NCBIfam" id="TIGR00060">
    <property type="entry name" value="L18_bact"/>
    <property type="match status" value="1"/>
</dbReference>
<dbReference type="PANTHER" id="PTHR12899">
    <property type="entry name" value="39S RIBOSOMAL PROTEIN L18, MITOCHONDRIAL"/>
    <property type="match status" value="1"/>
</dbReference>
<dbReference type="PANTHER" id="PTHR12899:SF3">
    <property type="entry name" value="LARGE RIBOSOMAL SUBUNIT PROTEIN UL18M"/>
    <property type="match status" value="1"/>
</dbReference>
<dbReference type="Pfam" id="PF00861">
    <property type="entry name" value="Ribosomal_L18p"/>
    <property type="match status" value="1"/>
</dbReference>
<dbReference type="SUPFAM" id="SSF53137">
    <property type="entry name" value="Translational machinery components"/>
    <property type="match status" value="1"/>
</dbReference>
<feature type="chain" id="PRO_0000251335" description="Large ribosomal subunit protein uL18">
    <location>
        <begin position="1"/>
        <end position="120"/>
    </location>
</feature>
<proteinExistence type="inferred from homology"/>
<evidence type="ECO:0000255" key="1">
    <source>
        <dbReference type="HAMAP-Rule" id="MF_01337"/>
    </source>
</evidence>
<evidence type="ECO:0000305" key="2"/>
<sequence>MSKLKITNARRKQRVRLSLRRIANGRPRLSVFRSSKHIYAQVIDDLKGETLASASSLEKAMRDAGNTGADIDAAKAVGKLVAERAVKNGVKEVVFDRGGYLYHGRVKALADAARESGLSF</sequence>
<comment type="function">
    <text evidence="1">This is one of the proteins that bind and probably mediate the attachment of the 5S RNA into the large ribosomal subunit, where it forms part of the central protuberance.</text>
</comment>
<comment type="subunit">
    <text evidence="1">Part of the 50S ribosomal subunit; part of the 5S rRNA/L5/L18/L25 subcomplex. Contacts the 5S and 23S rRNAs.</text>
</comment>
<comment type="similarity">
    <text evidence="1">Belongs to the universal ribosomal protein uL18 family.</text>
</comment>
<reference key="1">
    <citation type="journal article" date="2006" name="Appl. Environ. Microbiol.">
        <title>Genome sequence of the chemolithoautotrophic nitrite-oxidizing bacterium Nitrobacter winogradskyi Nb-255.</title>
        <authorList>
            <person name="Starkenburg S.R."/>
            <person name="Chain P.S.G."/>
            <person name="Sayavedra-Soto L.A."/>
            <person name="Hauser L."/>
            <person name="Land M.L."/>
            <person name="Larimer F.W."/>
            <person name="Malfatti S.A."/>
            <person name="Klotz M.G."/>
            <person name="Bottomley P.J."/>
            <person name="Arp D.J."/>
            <person name="Hickey W.J."/>
        </authorList>
    </citation>
    <scope>NUCLEOTIDE SEQUENCE [LARGE SCALE GENOMIC DNA]</scope>
    <source>
        <strain>ATCC 25391 / DSM 10237 / CIP 104748 / NCIMB 11846 / Nb-255</strain>
    </source>
</reference>
<gene>
    <name evidence="1" type="primary">rplR</name>
    <name type="ordered locus">Nwi_1380</name>
</gene>
<accession>Q3SSV0</accession>
<name>RL18_NITWN</name>
<keyword id="KW-1185">Reference proteome</keyword>
<keyword id="KW-0687">Ribonucleoprotein</keyword>
<keyword id="KW-0689">Ribosomal protein</keyword>
<keyword id="KW-0694">RNA-binding</keyword>
<keyword id="KW-0699">rRNA-binding</keyword>
<protein>
    <recommendedName>
        <fullName evidence="1">Large ribosomal subunit protein uL18</fullName>
    </recommendedName>
    <alternativeName>
        <fullName evidence="2">50S ribosomal protein L18</fullName>
    </alternativeName>
</protein>
<organism>
    <name type="scientific">Nitrobacter winogradskyi (strain ATCC 25391 / DSM 10237 / CIP 104748 / NCIMB 11846 / Nb-255)</name>
    <dbReference type="NCBI Taxonomy" id="323098"/>
    <lineage>
        <taxon>Bacteria</taxon>
        <taxon>Pseudomonadati</taxon>
        <taxon>Pseudomonadota</taxon>
        <taxon>Alphaproteobacteria</taxon>
        <taxon>Hyphomicrobiales</taxon>
        <taxon>Nitrobacteraceae</taxon>
        <taxon>Nitrobacter</taxon>
    </lineage>
</organism>